<proteinExistence type="evidence at protein level"/>
<name>NUP98_CAEEL</name>
<feature type="chain" id="PRO_0000417448" description="Nuclear pore complex protein Nup98" evidence="14">
    <location>
        <begin position="1"/>
        <end position="919"/>
    </location>
</feature>
<feature type="chain" id="PRO_0000417449" description="Nuclear pore complex protein Nup96" evidence="14">
    <location>
        <begin position="920"/>
        <end position="1678"/>
    </location>
</feature>
<feature type="domain" description="Peptidase S59" evidence="3">
    <location>
        <begin position="777"/>
        <end position="919"/>
    </location>
</feature>
<feature type="region of interest" description="Disordered" evidence="4">
    <location>
        <begin position="1"/>
        <end position="41"/>
    </location>
</feature>
<feature type="region of interest" description="Disordered" evidence="4">
    <location>
        <begin position="68"/>
        <end position="100"/>
    </location>
</feature>
<feature type="region of interest" description="Disordered" evidence="4">
    <location>
        <begin position="301"/>
        <end position="366"/>
    </location>
</feature>
<feature type="region of interest" description="Disordered" evidence="4">
    <location>
        <begin position="441"/>
        <end position="473"/>
    </location>
</feature>
<feature type="region of interest" description="Disordered" evidence="4">
    <location>
        <begin position="603"/>
        <end position="631"/>
    </location>
</feature>
<feature type="compositionally biased region" description="Low complexity" evidence="4">
    <location>
        <begin position="1"/>
        <end position="11"/>
    </location>
</feature>
<feature type="compositionally biased region" description="Gly residues" evidence="4">
    <location>
        <begin position="12"/>
        <end position="22"/>
    </location>
</feature>
<feature type="compositionally biased region" description="Low complexity" evidence="4">
    <location>
        <begin position="23"/>
        <end position="38"/>
    </location>
</feature>
<feature type="compositionally biased region" description="Low complexity" evidence="4">
    <location>
        <begin position="73"/>
        <end position="83"/>
    </location>
</feature>
<feature type="compositionally biased region" description="Polar residues" evidence="4">
    <location>
        <begin position="306"/>
        <end position="329"/>
    </location>
</feature>
<feature type="compositionally biased region" description="Low complexity" evidence="4">
    <location>
        <begin position="345"/>
        <end position="366"/>
    </location>
</feature>
<feature type="compositionally biased region" description="Polar residues" evidence="4">
    <location>
        <begin position="456"/>
        <end position="473"/>
    </location>
</feature>
<feature type="compositionally biased region" description="Polar residues" evidence="4">
    <location>
        <begin position="615"/>
        <end position="628"/>
    </location>
</feature>
<feature type="active site" description="Nucleophile" evidence="1">
    <location>
        <position position="920"/>
    </location>
</feature>
<feature type="site" description="Cleavage; by autolysis" evidence="1">
    <location>
        <begin position="919"/>
        <end position="920"/>
    </location>
</feature>
<feature type="splice variant" id="VSP_043738" description="In isoform c." evidence="12">
    <original>S</original>
    <variation>SAS</variation>
    <location>
        <position position="140"/>
    </location>
</feature>
<feature type="splice variant" id="VSP_043739" description="In isoform a and isoform c." evidence="12">
    <original>IIL</original>
    <variation>VRF</variation>
    <location>
        <begin position="978"/>
        <end position="980"/>
    </location>
</feature>
<feature type="splice variant" id="VSP_043740" description="In isoform a and isoform c." evidence="12">
    <location>
        <begin position="982"/>
        <end position="1678"/>
    </location>
</feature>
<gene>
    <name evidence="18" type="primary">npp-10</name>
    <name type="ORF">ZK328.5</name>
</gene>
<evidence type="ECO:0000250" key="1">
    <source>
        <dbReference type="UniProtKB" id="P52948"/>
    </source>
</evidence>
<evidence type="ECO:0000255" key="2"/>
<evidence type="ECO:0000255" key="3">
    <source>
        <dbReference type="PROSITE-ProRule" id="PRU00765"/>
    </source>
</evidence>
<evidence type="ECO:0000256" key="4">
    <source>
        <dbReference type="SAM" id="MobiDB-lite"/>
    </source>
</evidence>
<evidence type="ECO:0000269" key="5">
    <source>
    </source>
</evidence>
<evidence type="ECO:0000269" key="6">
    <source>
    </source>
</evidence>
<evidence type="ECO:0000269" key="7">
    <source>
    </source>
</evidence>
<evidence type="ECO:0000269" key="8">
    <source>
    </source>
</evidence>
<evidence type="ECO:0000269" key="9">
    <source>
    </source>
</evidence>
<evidence type="ECO:0000269" key="10">
    <source>
    </source>
</evidence>
<evidence type="ECO:0000303" key="11">
    <source>
    </source>
</evidence>
<evidence type="ECO:0000303" key="12">
    <source>
    </source>
</evidence>
<evidence type="ECO:0000305" key="13"/>
<evidence type="ECO:0000305" key="14">
    <source>
    </source>
</evidence>
<evidence type="ECO:0000312" key="15">
    <source>
        <dbReference type="EMBL" id="ADF47155.1"/>
    </source>
</evidence>
<evidence type="ECO:0000312" key="16">
    <source>
        <dbReference type="EMBL" id="CCD70954.1"/>
    </source>
</evidence>
<evidence type="ECO:0000312" key="17">
    <source>
        <dbReference type="EMBL" id="CCD70955.1"/>
    </source>
</evidence>
<evidence type="ECO:0000312" key="18">
    <source>
        <dbReference type="WormBase" id="ZK328.5b"/>
    </source>
</evidence>
<reference evidence="13 15" key="1">
    <citation type="journal article" date="2010" name="Development">
        <title>The C. elegans homolog of nucleoporin Nup98 is required for the integrity and function of germline P granules.</title>
        <authorList>
            <person name="Voronina E."/>
            <person name="Seydoux G."/>
        </authorList>
    </citation>
    <scope>NUCLEOTIDE SEQUENCE [MRNA] (ISOFORM B)</scope>
    <scope>FUNCTION</scope>
    <scope>SUBCELLULAR LOCATION</scope>
    <scope>PROTEOLYTIC CLEAVAGE</scope>
    <scope>DISRUPTION PHENOTYPE</scope>
    <source>
        <strain evidence="15">Bristol N2</strain>
    </source>
</reference>
<reference evidence="13 16" key="2">
    <citation type="journal article" date="1998" name="Science">
        <title>Genome sequence of the nematode C. elegans: a platform for investigating biology.</title>
        <authorList>
            <consortium name="The C. elegans sequencing consortium"/>
        </authorList>
    </citation>
    <scope>NUCLEOTIDE SEQUENCE [LARGE SCALE GENOMIC DNA]</scope>
    <source>
        <strain evidence="17">Bristol N2</strain>
    </source>
</reference>
<reference key="3">
    <citation type="journal article" date="2003" name="Mol. Biol. Cell">
        <title>Caenorhabditis elegans nucleoporins Nup93 and Nup205 determine the limit of nuclear pore complex size exclusion in vivo.</title>
        <authorList>
            <person name="Galy V."/>
            <person name="Mattaj I.W."/>
            <person name="Askjaer P."/>
        </authorList>
    </citation>
    <scope>SUBCELLULAR LOCATION</scope>
    <scope>DEVELOPMENTAL STAGE</scope>
    <scope>DISRUPTION PHENOTYPE</scope>
</reference>
<reference key="4">
    <citation type="journal article" date="2006" name="Curr. Biol.">
        <title>MEL-28, a novel nuclear-envelope and kinetochore protein essential for zygotic nuclear-envelope assembly in C. elegans.</title>
        <authorList>
            <person name="Galy V."/>
            <person name="Askjaer P."/>
            <person name="Franz C."/>
            <person name="Lopez-Iglesias C."/>
            <person name="Mattaj I.W."/>
        </authorList>
    </citation>
    <scope>SUBCELLULAR LOCATION</scope>
</reference>
<reference key="5">
    <citation type="journal article" date="2012" name="Mol. Biol. Cell">
        <title>Dissection of the NUP107 nuclear pore subcomplex reveals a novel interaction with spindle assembly checkpoint protein MAD1 in Caenorhabditis elegans.</title>
        <authorList>
            <person name="Rodenas E."/>
            <person name="Gonzalez-Aguilera C."/>
            <person name="Ayuso C."/>
            <person name="Askjaer P."/>
        </authorList>
    </citation>
    <scope>FUNCTION</scope>
    <scope>SUBCELLULAR LOCATION</scope>
    <scope>DEVELOPMENTAL STAGE</scope>
    <scope>DISRUPTION PHENOTYPE</scope>
</reference>
<reference key="6">
    <citation type="journal article" date="2017" name="J. Cell Sci.">
        <title>Nucleoporins NPP-10, NPP-13 and NPP-20 are required for HCP-4 nuclear import to establish correct centromere assembly.</title>
        <authorList>
            <person name="Ferreira J."/>
            <person name="Stear J.H."/>
            <person name="Saumweber H."/>
        </authorList>
    </citation>
    <scope>FUNCTION</scope>
    <scope>SUBCELLULAR LOCATION</scope>
    <scope>DISRUPTION PHENOTYPE</scope>
</reference>
<protein>
    <recommendedName>
        <fullName evidence="1">Nuclear pore complex protein Nup98-Nup96</fullName>
        <ecNumber evidence="1">3.4.21.-</ecNumber>
    </recommendedName>
    <component>
        <recommendedName>
            <fullName evidence="1">Nuclear pore complex protein Nup98</fullName>
        </recommendedName>
        <alternativeName>
            <fullName evidence="1">98 kDa nucleoporin</fullName>
        </alternativeName>
        <alternativeName>
            <fullName evidence="1">Nucleoporin Nup98</fullName>
            <shortName evidence="11">CeNup98</shortName>
        </alternativeName>
    </component>
    <component>
        <recommendedName>
            <fullName evidence="1">Nuclear pore complex protein Nup96</fullName>
        </recommendedName>
        <alternativeName>
            <fullName evidence="1">96 kDa nucleoporin</fullName>
        </alternativeName>
        <alternativeName>
            <fullName evidence="1">Nucleoporin Nup96</fullName>
            <shortName evidence="11">CeNup96</shortName>
        </alternativeName>
    </component>
</protein>
<organism>
    <name type="scientific">Caenorhabditis elegans</name>
    <dbReference type="NCBI Taxonomy" id="6239"/>
    <lineage>
        <taxon>Eukaryota</taxon>
        <taxon>Metazoa</taxon>
        <taxon>Ecdysozoa</taxon>
        <taxon>Nematoda</taxon>
        <taxon>Chromadorea</taxon>
        <taxon>Rhabditida</taxon>
        <taxon>Rhabditina</taxon>
        <taxon>Rhabditomorpha</taxon>
        <taxon>Rhabditoidea</taxon>
        <taxon>Rhabditidae</taxon>
        <taxon>Peloderinae</taxon>
        <taxon>Caenorhabditis</taxon>
    </lineage>
</organism>
<comment type="function">
    <text evidence="7 8 9">Nup98 and Nup96 play a role in the bidirectional transport across the nucleoporin complex (NPC) (PubMed:20335358, PubMed:28122936). Required for the nuclear import of hcp-4 during mitotic prophase, this step is essential for centrosome assembly and resolution (PubMed:28122936). Regulates nucleoporin npp-5 localization to the nuclear membrane during interphase and to kinetochores during metaphase (PubMed:22238360). Has a role in P granule integrity; may promote the 'liquid phase' of P granules by increasing the number of interacting RNA-protein complexes (PubMed:20335358). Binds nos-2 mRNA, probably indirectly, and promotes its accumulation in P granules (PubMed:20335358).</text>
</comment>
<comment type="subunit">
    <text evidence="1">Part of the NPC.</text>
</comment>
<comment type="subcellular location">
    <molecule>Nuclear pore complex protein Nup98</molecule>
    <subcellularLocation>
        <location evidence="7">Cytoplasmic granule</location>
    </subcellularLocation>
    <subcellularLocation>
        <location evidence="5 7 9">Nucleus membrane</location>
        <topology evidence="7">Peripheral membrane protein</topology>
        <orientation evidence="7">Nucleoplasmic side</orientation>
    </subcellularLocation>
    <text evidence="7">P granule localization dependent on nucleoporins npp-7, npp-8 and npp-9 which are involved in P granule integrity.</text>
</comment>
<comment type="subcellular location">
    <molecule>Nuclear pore complex protein Nup96</molecule>
    <subcellularLocation>
        <location evidence="7">Nucleus</location>
        <location evidence="7">Nuclear pore complex</location>
    </subcellularLocation>
    <subcellularLocation>
        <location evidence="5 7 8">Nucleus envelope</location>
    </subcellularLocation>
    <subcellularLocation>
        <location evidence="6">Chromosome</location>
    </subcellularLocation>
    <text evidence="6">Requires mel-28 for chromatin association during early steps of nuclear pore complex assembly.</text>
</comment>
<comment type="alternative products">
    <event type="alternative splicing"/>
    <isoform>
        <id>G5EEH9-1</id>
        <name evidence="7">b</name>
        <sequence type="displayed"/>
    </isoform>
    <isoform>
        <id>G5EEH9-2</id>
        <name evidence="10">a</name>
        <sequence type="described" ref="VSP_043739 VSP_043740"/>
    </isoform>
    <isoform>
        <id>G5EEH9-3</id>
        <name evidence="10">c</name>
        <sequence type="described" ref="VSP_043738 VSP_043739 VSP_043740"/>
    </isoform>
</comment>
<comment type="developmental stage">
    <text evidence="5 8">Expressed in embryos (at protein level).</text>
</comment>
<comment type="PTM">
    <text evidence="7">The Nup98 and Nup96 chains are autoproteolytically processed from a single precursor protein.</text>
</comment>
<comment type="disruption phenotype">
    <text evidence="5 7 8 9">RNAi-mediated knockdown results in embryonic lethality (PubMed:12937276, PubMed:28122936). Two-cell embryos appear to lack nuclei and pronuclei (PubMed:12937276). Also causes severe defects in mitosis (PubMed:22238360, PubMed:28122936). Chromosome condensation is severely impaired during prophase (PubMed:28122936). Centrosome assembly during prophase and prometaphase and their subsequent resolution are impaired which results from impaired nuclear import of hcp-4 (PubMed:28122936). Impaired sister chromatin segregation (PubMed:28122936). Loss of nucleoporin npp-5 localization to the nuclear membrane during interphase and to kinetochores during metaphase (PubMed:22238360). Irregular nuclear membrane distribution of nucleoporin npp-13 (PubMed:28122936). Mutants display P granule dispersion (PubMed:20335358).</text>
</comment>
<comment type="similarity">
    <text evidence="2">Belongs to the nucleoporin GLFG family.</text>
</comment>
<dbReference type="EC" id="3.4.21.-" evidence="1"/>
<dbReference type="EMBL" id="GU174496">
    <property type="protein sequence ID" value="ADF47155.1"/>
    <property type="molecule type" value="mRNA"/>
</dbReference>
<dbReference type="EMBL" id="FO081350">
    <property type="protein sequence ID" value="CCD70954.1"/>
    <property type="molecule type" value="Genomic_DNA"/>
</dbReference>
<dbReference type="EMBL" id="FO081350">
    <property type="protein sequence ID" value="CCD70955.1"/>
    <property type="molecule type" value="Genomic_DNA"/>
</dbReference>
<dbReference type="EMBL" id="FO081350">
    <property type="protein sequence ID" value="CCD70956.1"/>
    <property type="molecule type" value="Genomic_DNA"/>
</dbReference>
<dbReference type="RefSeq" id="NP_001254934.1">
    <molecule id="G5EEH9-3"/>
    <property type="nucleotide sequence ID" value="NM_001268005.2"/>
</dbReference>
<dbReference type="RefSeq" id="NP_001367842.1">
    <molecule id="G5EEH9-1"/>
    <property type="nucleotide sequence ID" value="NM_001379737.1"/>
</dbReference>
<dbReference type="RefSeq" id="NP_498309.3">
    <property type="nucleotide sequence ID" value="NM_065908.3"/>
</dbReference>
<dbReference type="RefSeq" id="NP_498310.3">
    <molecule id="G5EEH9-2"/>
    <property type="nucleotide sequence ID" value="NM_065909.6"/>
</dbReference>
<dbReference type="SMR" id="G5EEH9"/>
<dbReference type="BioGRID" id="41073">
    <property type="interactions" value="44"/>
</dbReference>
<dbReference type="FunCoup" id="G5EEH9">
    <property type="interactions" value="3347"/>
</dbReference>
<dbReference type="IntAct" id="G5EEH9">
    <property type="interactions" value="8"/>
</dbReference>
<dbReference type="STRING" id="6239.ZK328.5b.1"/>
<dbReference type="MEROPS" id="S59.A06"/>
<dbReference type="PaxDb" id="6239-ZK328.5b"/>
<dbReference type="PeptideAtlas" id="G5EEH9"/>
<dbReference type="EnsemblMetazoa" id="ZK328.5a.1">
    <molecule id="G5EEH9-2"/>
    <property type="protein sequence ID" value="ZK328.5a.1"/>
    <property type="gene ID" value="WBGene00003796"/>
</dbReference>
<dbReference type="EnsemblMetazoa" id="ZK328.5b.1">
    <molecule id="G5EEH9-1"/>
    <property type="protein sequence ID" value="ZK328.5b.1"/>
    <property type="gene ID" value="WBGene00003796"/>
</dbReference>
<dbReference type="EnsemblMetazoa" id="ZK328.5c.1">
    <molecule id="G5EEH9-3"/>
    <property type="protein sequence ID" value="ZK328.5c.1"/>
    <property type="gene ID" value="WBGene00003796"/>
</dbReference>
<dbReference type="GeneID" id="175852"/>
<dbReference type="KEGG" id="cel:CELE_ZK328.5"/>
<dbReference type="AGR" id="WB:WBGene00003796"/>
<dbReference type="CTD" id="175852"/>
<dbReference type="WormBase" id="ZK328.5a">
    <molecule id="G5EEH9-2"/>
    <property type="protein sequence ID" value="CE44281"/>
    <property type="gene ID" value="WBGene00003796"/>
    <property type="gene designation" value="npp-10"/>
</dbReference>
<dbReference type="WormBase" id="ZK328.5b">
    <molecule id="G5EEH9-1"/>
    <property type="protein sequence ID" value="CE44292"/>
    <property type="gene ID" value="WBGene00003796"/>
    <property type="gene designation" value="npp-10"/>
</dbReference>
<dbReference type="WormBase" id="ZK328.5c">
    <molecule id="G5EEH9-3"/>
    <property type="protein sequence ID" value="CE44327"/>
    <property type="gene ID" value="WBGene00003796"/>
    <property type="gene designation" value="npp-10"/>
</dbReference>
<dbReference type="eggNOG" id="KOG0845">
    <property type="taxonomic scope" value="Eukaryota"/>
</dbReference>
<dbReference type="GeneTree" id="ENSGT00550000074799"/>
<dbReference type="HOGENOM" id="CLU_002330_1_0_1"/>
<dbReference type="InParanoid" id="G5EEH9"/>
<dbReference type="OMA" id="HFRQHEV"/>
<dbReference type="OrthoDB" id="3797628at2759"/>
<dbReference type="PhylomeDB" id="G5EEH9"/>
<dbReference type="Reactome" id="R-CEL-9615933">
    <property type="pathway name" value="Postmitotic nuclear pore complex (NPC) reformation"/>
</dbReference>
<dbReference type="CD-CODE" id="73A75392">
    <property type="entry name" value="P-granule"/>
</dbReference>
<dbReference type="CD-CODE" id="807266B4">
    <property type="entry name" value="Nuclear pore complex"/>
</dbReference>
<dbReference type="CD-CODE" id="EE0382A7">
    <property type="entry name" value="P-body"/>
</dbReference>
<dbReference type="PRO" id="PR:G5EEH9"/>
<dbReference type="Proteomes" id="UP000001940">
    <property type="component" value="Chromosome III"/>
</dbReference>
<dbReference type="Bgee" id="WBGene00003796">
    <property type="expression patterns" value="Expressed in embryo and 4 other cell types or tissues"/>
</dbReference>
<dbReference type="GO" id="GO:0005737">
    <property type="term" value="C:cytoplasm"/>
    <property type="evidence" value="ECO:0000314"/>
    <property type="project" value="WormBase"/>
</dbReference>
<dbReference type="GO" id="GO:0000776">
    <property type="term" value="C:kinetochore"/>
    <property type="evidence" value="ECO:0000315"/>
    <property type="project" value="UniProtKB"/>
</dbReference>
<dbReference type="GO" id="GO:0005635">
    <property type="term" value="C:nuclear envelope"/>
    <property type="evidence" value="ECO:0000314"/>
    <property type="project" value="WormBase"/>
</dbReference>
<dbReference type="GO" id="GO:0031965">
    <property type="term" value="C:nuclear membrane"/>
    <property type="evidence" value="ECO:0007669"/>
    <property type="project" value="UniProtKB-SubCell"/>
</dbReference>
<dbReference type="GO" id="GO:0005643">
    <property type="term" value="C:nuclear pore"/>
    <property type="evidence" value="ECO:0000314"/>
    <property type="project" value="UniProtKB"/>
</dbReference>
<dbReference type="GO" id="GO:0044614">
    <property type="term" value="C:nuclear pore cytoplasmic filaments"/>
    <property type="evidence" value="ECO:0000318"/>
    <property type="project" value="GO_Central"/>
</dbReference>
<dbReference type="GO" id="GO:0043186">
    <property type="term" value="C:P granule"/>
    <property type="evidence" value="ECO:0000314"/>
    <property type="project" value="UniProtKB"/>
</dbReference>
<dbReference type="GO" id="GO:0008139">
    <property type="term" value="F:nuclear localization sequence binding"/>
    <property type="evidence" value="ECO:0000318"/>
    <property type="project" value="GO_Central"/>
</dbReference>
<dbReference type="GO" id="GO:0003723">
    <property type="term" value="F:RNA binding"/>
    <property type="evidence" value="ECO:0000314"/>
    <property type="project" value="UniProtKB"/>
</dbReference>
<dbReference type="GO" id="GO:0008236">
    <property type="term" value="F:serine-type peptidase activity"/>
    <property type="evidence" value="ECO:0007669"/>
    <property type="project" value="UniProtKB-KW"/>
</dbReference>
<dbReference type="GO" id="GO:0017056">
    <property type="term" value="F:structural constituent of nuclear pore"/>
    <property type="evidence" value="ECO:0000318"/>
    <property type="project" value="GO_Central"/>
</dbReference>
<dbReference type="GO" id="GO:0051301">
    <property type="term" value="P:cell division"/>
    <property type="evidence" value="ECO:0007669"/>
    <property type="project" value="UniProtKB-KW"/>
</dbReference>
<dbReference type="GO" id="GO:0009792">
    <property type="term" value="P:embryo development ending in birth or egg hatching"/>
    <property type="evidence" value="ECO:0000315"/>
    <property type="project" value="UniProtKB"/>
</dbReference>
<dbReference type="GO" id="GO:1990893">
    <property type="term" value="P:mitotic chromosome centromere condensation"/>
    <property type="evidence" value="ECO:0000315"/>
    <property type="project" value="UniProtKB"/>
</dbReference>
<dbReference type="GO" id="GO:0051028">
    <property type="term" value="P:mRNA transport"/>
    <property type="evidence" value="ECO:0000303"/>
    <property type="project" value="UniProtKB"/>
</dbReference>
<dbReference type="GO" id="GO:0051664">
    <property type="term" value="P:nuclear pore localization"/>
    <property type="evidence" value="ECO:0000315"/>
    <property type="project" value="UniProtKB"/>
</dbReference>
<dbReference type="GO" id="GO:0006997">
    <property type="term" value="P:nucleus organization"/>
    <property type="evidence" value="ECO:0000315"/>
    <property type="project" value="UniProtKB"/>
</dbReference>
<dbReference type="GO" id="GO:0030719">
    <property type="term" value="P:P granule organization"/>
    <property type="evidence" value="ECO:0000315"/>
    <property type="project" value="UniProtKB"/>
</dbReference>
<dbReference type="GO" id="GO:0000973">
    <property type="term" value="P:post-transcriptional tethering of RNA polymerase II gene DNA at nuclear periphery"/>
    <property type="evidence" value="ECO:0000318"/>
    <property type="project" value="GO_Central"/>
</dbReference>
<dbReference type="GO" id="GO:0006606">
    <property type="term" value="P:protein import into nucleus"/>
    <property type="evidence" value="ECO:0000315"/>
    <property type="project" value="UniProtKB"/>
</dbReference>
<dbReference type="GO" id="GO:0034501">
    <property type="term" value="P:protein localization to kinetochore"/>
    <property type="evidence" value="ECO:0000315"/>
    <property type="project" value="UniProtKB"/>
</dbReference>
<dbReference type="GO" id="GO:0090435">
    <property type="term" value="P:protein localization to nuclear envelope"/>
    <property type="evidence" value="ECO:0000315"/>
    <property type="project" value="UniProtKB"/>
</dbReference>
<dbReference type="GO" id="GO:0015031">
    <property type="term" value="P:protein transport"/>
    <property type="evidence" value="ECO:0000303"/>
    <property type="project" value="UniProtKB"/>
</dbReference>
<dbReference type="GO" id="GO:0006508">
    <property type="term" value="P:proteolysis"/>
    <property type="evidence" value="ECO:0007669"/>
    <property type="project" value="UniProtKB-KW"/>
</dbReference>
<dbReference type="GO" id="GO:0006405">
    <property type="term" value="P:RNA export from nucleus"/>
    <property type="evidence" value="ECO:0000318"/>
    <property type="project" value="GO_Central"/>
</dbReference>
<dbReference type="GO" id="GO:0034398">
    <property type="term" value="P:telomere tethering at nuclear periphery"/>
    <property type="evidence" value="ECO:0000318"/>
    <property type="project" value="GO_Central"/>
</dbReference>
<dbReference type="FunFam" id="1.10.10.2360:FF:000001">
    <property type="entry name" value="Nuclear pore complex protein Nup98-Nup96"/>
    <property type="match status" value="1"/>
</dbReference>
<dbReference type="FunFam" id="3.30.1610.10:FF:000002">
    <property type="entry name" value="nuclear pore complex protein NUP98A"/>
    <property type="match status" value="1"/>
</dbReference>
<dbReference type="Gene3D" id="1.10.10.2360">
    <property type="match status" value="1"/>
</dbReference>
<dbReference type="Gene3D" id="1.25.40.690">
    <property type="match status" value="1"/>
</dbReference>
<dbReference type="Gene3D" id="3.30.1610.10">
    <property type="entry name" value="Peptidase S59, nucleoporin"/>
    <property type="match status" value="1"/>
</dbReference>
<dbReference type="InterPro" id="IPR025574">
    <property type="entry name" value="Nucleoporin_FG_rpt"/>
</dbReference>
<dbReference type="InterPro" id="IPR037665">
    <property type="entry name" value="Nucleoporin_S59-like"/>
</dbReference>
<dbReference type="InterPro" id="IPR007230">
    <property type="entry name" value="Nup98_auto-Pept-S59_dom"/>
</dbReference>
<dbReference type="InterPro" id="IPR036903">
    <property type="entry name" value="Nup98_auto-Pept-S59_dom_sf"/>
</dbReference>
<dbReference type="InterPro" id="IPR021967">
    <property type="entry name" value="Nup98_C"/>
</dbReference>
<dbReference type="PANTHER" id="PTHR23198:SF6">
    <property type="entry name" value="NUCLEAR PORE COMPLEX PROTEIN NUP98-NUP96"/>
    <property type="match status" value="1"/>
</dbReference>
<dbReference type="PANTHER" id="PTHR23198">
    <property type="entry name" value="NUCLEOPORIN"/>
    <property type="match status" value="1"/>
</dbReference>
<dbReference type="Pfam" id="PF04096">
    <property type="entry name" value="Nucleoporin2"/>
    <property type="match status" value="1"/>
</dbReference>
<dbReference type="Pfam" id="PF13634">
    <property type="entry name" value="Nucleoporin_FG"/>
    <property type="match status" value="4"/>
</dbReference>
<dbReference type="Pfam" id="PF12110">
    <property type="entry name" value="Nup96"/>
    <property type="match status" value="1"/>
</dbReference>
<dbReference type="Pfam" id="PF21240">
    <property type="entry name" value="Nup98_GLEBS"/>
    <property type="match status" value="1"/>
</dbReference>
<dbReference type="SUPFAM" id="SSF82215">
    <property type="entry name" value="C-terminal autoproteolytic domain of nucleoporin nup98"/>
    <property type="match status" value="1"/>
</dbReference>
<dbReference type="PROSITE" id="PS51434">
    <property type="entry name" value="NUP_C"/>
    <property type="match status" value="1"/>
</dbReference>
<keyword id="KW-0025">Alternative splicing</keyword>
<keyword id="KW-0068">Autocatalytic cleavage</keyword>
<keyword id="KW-0131">Cell cycle</keyword>
<keyword id="KW-0132">Cell division</keyword>
<keyword id="KW-0158">Chromosome</keyword>
<keyword id="KW-0378">Hydrolase</keyword>
<keyword id="KW-0472">Membrane</keyword>
<keyword id="KW-0498">Mitosis</keyword>
<keyword id="KW-0509">mRNA transport</keyword>
<keyword id="KW-0906">Nuclear pore complex</keyword>
<keyword id="KW-0539">Nucleus</keyword>
<keyword id="KW-0645">Protease</keyword>
<keyword id="KW-0653">Protein transport</keyword>
<keyword id="KW-1185">Reference proteome</keyword>
<keyword id="KW-0694">RNA-binding</keyword>
<keyword id="KW-0720">Serine protease</keyword>
<keyword id="KW-0811">Translocation</keyword>
<keyword id="KW-0813">Transport</keyword>
<sequence>MFGQNKSFGSSSFGGGSSGSGLFGQNNQNNQNKGLFGQPANNSGTTGLFGAAQNKPAGSIFGAASNTSSIFGSPQQPQNNQSSLFGGGQNNANRSIFGSTSSAAPASSSLFGNNANNTGTSSIFGSNNNAPSGGGLFGASTVSGTTVKFEPPISSDTMMRNGTTQTISTKHMCISAMSKYDGKSIEELRVEDYIANRKAPGTGTTSTGGGLFGASNTTNQAGSSGLFGSSNAQQKTSLFGGASTSSPFGGNTSTANTGSSLFGNNNANTSAASGSLFGAKPAGSSLFGSTATTGASTFGQTTGSSLFGNQQPQTNTGGSLFGNTQNQNQSGSLFGNTGTTGTGLFGQAQQQPQQQSSGFSFGGAPAATNAFGQPAAANTGGSLFGNTSTANTGSSLFGAKPATSTGFTFGATQPTTTNAFGSTNTGGGLFGNNAAKPGGLFGNTTNTGTGGGLFGSQPQASSGGLFGSNTQATQPLNTGFGNLAQPQIVMQQQVAPVPVIGVTADVLQMQANMKSLKSQLTNAPYGDSPLLKYNANPEIDGKSSPASTQRQLRFLAAKKGALSSSSDAQDSSFIIPPISKVMSDLSPAVTRSADVTKDLNYTSKEAPPSLARGLRNSTFNPNMSLTNRSVHESSALDKTIDSALDASMNGTSNRLGVRGSVRRSNLKQLDMSLLADSSRVGRESRVADPDALPRISESERRQDVVTSTPAVDPVQAVIQRHNDRNRDPPSLNLDTTCDEHTGLEPVSAATSSAASVVSTPSEETVNVNSAAGVKLTKPDYFSLPTINEMKNMIKNGRVVLEDGLTVGRSSYGSVYWPGRVELKDVALDEIVVFRHREVTVYPNEEEKAPEGQELNRPAEVTLERVWYTDKKTKKEVRDVVKLSEIGWREHLERQTIRMGAAFKDFRAETGSWVFRVDHFSKYGLADDDEPMDGSPPQQALQASSPLQVIDMNTSARDVNNQVQRKKVHKATDAHHQEIILERVPAPAALGDVVPIIRRVNRKGLGGGTLDDSREESCIGNMTTEFNESGHDSIIEEGQQPEKKPKLELLADLEYESSRFIRNLQELKVMPKANDPAHRFHGGGHSAKMIGYGKSKLIDIGIVKGRSSHVGWSETGCLVWSAQPRHNQVLFGTIDRTSDVNENTLISMLDVNVHVSETSRKGPSSQSNSVKSSLTSNFVTYSDSYSSMFAKYIDVAQAGGYDGHVSVWKLISALFPYERREGWSFERGEEIGEWLRTEAVKSVPDDRSADTSSNGVWNQLCLGDIDKAFQIAIDNNQPQLATMLQTSAVCPEATVHCFKAQLDNWKKCETLHLIPKETLKCYVLMSGLSHYEWDQDGKNHSINCLDGLNWIQALGLHVWYLRAWTGLEESYDAYQKDVNAGRAASNRGDLPGELIKLACESQHSVEVVLDCAAGENPNDYFLQWHVWSLLYSVGYRTMSKTSETRLHRNYSSQLEASSLSKYALFVLQHIDDDEERSTAVRSLLDRIARFTDNDMFDSISEQFDIPSEWIADAQFSIAKSVDDSTQLFELAVAAKNYLEICRLFVDDIAPTAVVAGDHDALKAACAMVRPFENQIPEWGATGMVYTDYCRLINLIENDAEEELLQDVLESLETRLHAPTISKNSLQKLSLQTIGRVLFEYRADKNTLPEWTKLLGHRQMFKIFRDRSSWGIERFTIEFD</sequence>
<accession>G5EEH9</accession>
<accession>D1MN48</accession>
<accession>H2L014</accession>